<comment type="function">
    <text evidence="1">Repressor of jasmonate (JA) responses. Acts as a repressor of JA-induced resistance to the bacterial blight pathogen Xanthomonas oryzae pv. oryzae (Xoo). Regulates JA-induced accumulation of linalool at the transcriptional level of linalool synthase gene LIS. Linalool is important for resistance to bacterial blight pathogen Xoo.</text>
</comment>
<comment type="subunit">
    <text evidence="1">Interacts with BHLH148. Interacts with COI1B in a coronatine-dependent manner. Coronatine is an analog of jasmonoyl isoleucine (JA-Ile). Interacts with TIFY5/JAZ2, TIFY6B/JAZ4, TIFY9/JAZ5, TIFY11A, TIFY11D/JAZ12 and TIFY11G/JAZ15.</text>
</comment>
<comment type="subcellular location">
    <subcellularLocation>
        <location evidence="1 5">Nucleus</location>
    </subcellularLocation>
    <subcellularLocation>
        <location evidence="1">Cytoplasm</location>
        <location evidence="1">Cytosol</location>
    </subcellularLocation>
    <text evidence="1">Mainly localized in the nucleus.</text>
</comment>
<comment type="domain">
    <text evidence="2">The jas domain (177-202) is required for interaction with COI1.</text>
</comment>
<comment type="PTM">
    <text evidence="1">Ubiquitinated. Increase in jasmonoyl isoleucine (JA-Ile) levels mediates its degradation via COI1B-mediated proteasome pathway.</text>
</comment>
<comment type="similarity">
    <text evidence="7">Belongs to the TIFY/JAZ family.</text>
</comment>
<feature type="chain" id="PRO_0000434852" description="Protein TIFY 10c">
    <location>
        <begin position="1"/>
        <end position="232"/>
    </location>
</feature>
<feature type="domain" description="Tify" evidence="4">
    <location>
        <begin position="114"/>
        <end position="149"/>
    </location>
</feature>
<feature type="region of interest" description="Disordered" evidence="6">
    <location>
        <begin position="54"/>
        <end position="73"/>
    </location>
</feature>
<feature type="region of interest" description="Disordered" evidence="6">
    <location>
        <begin position="151"/>
        <end position="176"/>
    </location>
</feature>
<feature type="short sequence motif" description="Jas" evidence="3">
    <location>
        <begin position="177"/>
        <end position="202"/>
    </location>
</feature>
<feature type="short sequence motif" description="Nuclear localization signal" evidence="5">
    <location>
        <begin position="179"/>
        <end position="186"/>
    </location>
</feature>
<feature type="compositionally biased region" description="Polar residues" evidence="6">
    <location>
        <begin position="156"/>
        <end position="165"/>
    </location>
</feature>
<reference key="1">
    <citation type="journal article" date="2005" name="PLoS Biol.">
        <title>The genomes of Oryza sativa: a history of duplications.</title>
        <authorList>
            <person name="Yu J."/>
            <person name="Wang J."/>
            <person name="Lin W."/>
            <person name="Li S."/>
            <person name="Li H."/>
            <person name="Zhou J."/>
            <person name="Ni P."/>
            <person name="Dong W."/>
            <person name="Hu S."/>
            <person name="Zeng C."/>
            <person name="Zhang J."/>
            <person name="Zhang Y."/>
            <person name="Li R."/>
            <person name="Xu Z."/>
            <person name="Li S."/>
            <person name="Li X."/>
            <person name="Zheng H."/>
            <person name="Cong L."/>
            <person name="Lin L."/>
            <person name="Yin J."/>
            <person name="Geng J."/>
            <person name="Li G."/>
            <person name="Shi J."/>
            <person name="Liu J."/>
            <person name="Lv H."/>
            <person name="Li J."/>
            <person name="Wang J."/>
            <person name="Deng Y."/>
            <person name="Ran L."/>
            <person name="Shi X."/>
            <person name="Wang X."/>
            <person name="Wu Q."/>
            <person name="Li C."/>
            <person name="Ren X."/>
            <person name="Wang J."/>
            <person name="Wang X."/>
            <person name="Li D."/>
            <person name="Liu D."/>
            <person name="Zhang X."/>
            <person name="Ji Z."/>
            <person name="Zhao W."/>
            <person name="Sun Y."/>
            <person name="Zhang Z."/>
            <person name="Bao J."/>
            <person name="Han Y."/>
            <person name="Dong L."/>
            <person name="Ji J."/>
            <person name="Chen P."/>
            <person name="Wu S."/>
            <person name="Liu J."/>
            <person name="Xiao Y."/>
            <person name="Bu D."/>
            <person name="Tan J."/>
            <person name="Yang L."/>
            <person name="Ye C."/>
            <person name="Zhang J."/>
            <person name="Xu J."/>
            <person name="Zhou Y."/>
            <person name="Yu Y."/>
            <person name="Zhang B."/>
            <person name="Zhuang S."/>
            <person name="Wei H."/>
            <person name="Liu B."/>
            <person name="Lei M."/>
            <person name="Yu H."/>
            <person name="Li Y."/>
            <person name="Xu H."/>
            <person name="Wei S."/>
            <person name="He X."/>
            <person name="Fang L."/>
            <person name="Zhang Z."/>
            <person name="Zhang Y."/>
            <person name="Huang X."/>
            <person name="Su Z."/>
            <person name="Tong W."/>
            <person name="Li J."/>
            <person name="Tong Z."/>
            <person name="Li S."/>
            <person name="Ye J."/>
            <person name="Wang L."/>
            <person name="Fang L."/>
            <person name="Lei T."/>
            <person name="Chen C.-S."/>
            <person name="Chen H.-C."/>
            <person name="Xu Z."/>
            <person name="Li H."/>
            <person name="Huang H."/>
            <person name="Zhang F."/>
            <person name="Xu H."/>
            <person name="Li N."/>
            <person name="Zhao C."/>
            <person name="Li S."/>
            <person name="Dong L."/>
            <person name="Huang Y."/>
            <person name="Li L."/>
            <person name="Xi Y."/>
            <person name="Qi Q."/>
            <person name="Li W."/>
            <person name="Zhang B."/>
            <person name="Hu W."/>
            <person name="Zhang Y."/>
            <person name="Tian X."/>
            <person name="Jiao Y."/>
            <person name="Liang X."/>
            <person name="Jin J."/>
            <person name="Gao L."/>
            <person name="Zheng W."/>
            <person name="Hao B."/>
            <person name="Liu S.-M."/>
            <person name="Wang W."/>
            <person name="Yuan L."/>
            <person name="Cao M."/>
            <person name="McDermott J."/>
            <person name="Samudrala R."/>
            <person name="Wang J."/>
            <person name="Wong G.K.-S."/>
            <person name="Yang H."/>
        </authorList>
    </citation>
    <scope>NUCLEOTIDE SEQUENCE [LARGE SCALE GENOMIC DNA]</scope>
    <source>
        <strain>cv. 93-11</strain>
    </source>
</reference>
<dbReference type="EMBL" id="CM000134">
    <property type="protein sequence ID" value="EAZ09244.1"/>
    <property type="molecule type" value="Genomic_DNA"/>
</dbReference>
<dbReference type="SMR" id="A2Z1N3"/>
<dbReference type="STRING" id="39946.A2Z1N3"/>
<dbReference type="EnsemblPlants" id="BGIOSGA029689-TA">
    <property type="protein sequence ID" value="BGIOSGA029689-PA"/>
    <property type="gene ID" value="BGIOSGA029689"/>
</dbReference>
<dbReference type="EnsemblPlants" id="OsGoSa_09g0011610.01">
    <property type="protein sequence ID" value="OsGoSa_09g0011610.01"/>
    <property type="gene ID" value="OsGoSa_09g0011610"/>
</dbReference>
<dbReference type="EnsemblPlants" id="OsIR64_09g0011760.01">
    <property type="protein sequence ID" value="OsIR64_09g0011760.01"/>
    <property type="gene ID" value="OsIR64_09g0011760"/>
</dbReference>
<dbReference type="EnsemblPlants" id="OsKYG_09g0011520.01">
    <property type="protein sequence ID" value="OsKYG_09g0011520.01"/>
    <property type="gene ID" value="OsKYG_09g0011520"/>
</dbReference>
<dbReference type="EnsemblPlants" id="OsLaMu_09g0011510.01">
    <property type="protein sequence ID" value="OsLaMu_09g0011510.01"/>
    <property type="gene ID" value="OsLaMu_09g0011510"/>
</dbReference>
<dbReference type="EnsemblPlants" id="OsLima_09g0011720.01">
    <property type="protein sequence ID" value="OsLima_09g0011720.01"/>
    <property type="gene ID" value="OsLima_09g0011720"/>
</dbReference>
<dbReference type="EnsemblPlants" id="OsLiXu_09g0011410.01">
    <property type="protein sequence ID" value="OsLiXu_09g0011410.01"/>
    <property type="gene ID" value="OsLiXu_09g0011410"/>
</dbReference>
<dbReference type="EnsemblPlants" id="OsMH63_09G012180_01">
    <property type="protein sequence ID" value="OsMH63_09G012180_01"/>
    <property type="gene ID" value="OsMH63_09G012180"/>
</dbReference>
<dbReference type="EnsemblPlants" id="OsPr106_09g0011800.01">
    <property type="protein sequence ID" value="OsPr106_09g0011800.01"/>
    <property type="gene ID" value="OsPr106_09g0011800"/>
</dbReference>
<dbReference type="EnsemblPlants" id="OsZS97_09G011740_01">
    <property type="protein sequence ID" value="OsZS97_09G011740_01"/>
    <property type="gene ID" value="OsZS97_09G011740"/>
</dbReference>
<dbReference type="Gramene" id="BGIOSGA029689-TA">
    <property type="protein sequence ID" value="BGIOSGA029689-PA"/>
    <property type="gene ID" value="BGIOSGA029689"/>
</dbReference>
<dbReference type="Gramene" id="OsGoSa_09g0011610.01">
    <property type="protein sequence ID" value="OsGoSa_09g0011610.01"/>
    <property type="gene ID" value="OsGoSa_09g0011610"/>
</dbReference>
<dbReference type="Gramene" id="OsIR64_09g0011760.01">
    <property type="protein sequence ID" value="OsIR64_09g0011760.01"/>
    <property type="gene ID" value="OsIR64_09g0011760"/>
</dbReference>
<dbReference type="Gramene" id="OsKYG_09g0011520.01">
    <property type="protein sequence ID" value="OsKYG_09g0011520.01"/>
    <property type="gene ID" value="OsKYG_09g0011520"/>
</dbReference>
<dbReference type="Gramene" id="OsLaMu_09g0011510.01">
    <property type="protein sequence ID" value="OsLaMu_09g0011510.01"/>
    <property type="gene ID" value="OsLaMu_09g0011510"/>
</dbReference>
<dbReference type="Gramene" id="OsLima_09g0011720.01">
    <property type="protein sequence ID" value="OsLima_09g0011720.01"/>
    <property type="gene ID" value="OsLima_09g0011720"/>
</dbReference>
<dbReference type="Gramene" id="OsLiXu_09g0011410.01">
    <property type="protein sequence ID" value="OsLiXu_09g0011410.01"/>
    <property type="gene ID" value="OsLiXu_09g0011410"/>
</dbReference>
<dbReference type="Gramene" id="OsMH63_09G012180_01">
    <property type="protein sequence ID" value="OsMH63_09G012180_01"/>
    <property type="gene ID" value="OsMH63_09G012180"/>
</dbReference>
<dbReference type="Gramene" id="OsPr106_09g0011800.01">
    <property type="protein sequence ID" value="OsPr106_09g0011800.01"/>
    <property type="gene ID" value="OsPr106_09g0011800"/>
</dbReference>
<dbReference type="Gramene" id="OsZS97_09G011740_01">
    <property type="protein sequence ID" value="OsZS97_09G011740_01"/>
    <property type="gene ID" value="OsZS97_09G011740"/>
</dbReference>
<dbReference type="HOGENOM" id="CLU_051749_1_1_1"/>
<dbReference type="OMA" id="EAKEHDQ"/>
<dbReference type="OrthoDB" id="1937734at2759"/>
<dbReference type="Proteomes" id="UP000007015">
    <property type="component" value="Chromosome 9"/>
</dbReference>
<dbReference type="GO" id="GO:0005829">
    <property type="term" value="C:cytosol"/>
    <property type="evidence" value="ECO:0007669"/>
    <property type="project" value="UniProtKB-SubCell"/>
</dbReference>
<dbReference type="GO" id="GO:0005634">
    <property type="term" value="C:nucleus"/>
    <property type="evidence" value="ECO:0007669"/>
    <property type="project" value="UniProtKB-SubCell"/>
</dbReference>
<dbReference type="GO" id="GO:0006952">
    <property type="term" value="P:defense response"/>
    <property type="evidence" value="ECO:0007669"/>
    <property type="project" value="UniProtKB-KW"/>
</dbReference>
<dbReference type="GO" id="GO:0031347">
    <property type="term" value="P:regulation of defense response"/>
    <property type="evidence" value="ECO:0007669"/>
    <property type="project" value="TreeGrafter"/>
</dbReference>
<dbReference type="GO" id="GO:2000022">
    <property type="term" value="P:regulation of jasmonic acid mediated signaling pathway"/>
    <property type="evidence" value="ECO:0007669"/>
    <property type="project" value="TreeGrafter"/>
</dbReference>
<dbReference type="GO" id="GO:0009611">
    <property type="term" value="P:response to wounding"/>
    <property type="evidence" value="ECO:0007669"/>
    <property type="project" value="TreeGrafter"/>
</dbReference>
<dbReference type="InterPro" id="IPR018467">
    <property type="entry name" value="CCT_CS"/>
</dbReference>
<dbReference type="InterPro" id="IPR040390">
    <property type="entry name" value="TIFY/JAZ"/>
</dbReference>
<dbReference type="InterPro" id="IPR010399">
    <property type="entry name" value="Tify_dom"/>
</dbReference>
<dbReference type="PANTHER" id="PTHR33077:SF50">
    <property type="entry name" value="PROTEIN TIFY 10C"/>
    <property type="match status" value="1"/>
</dbReference>
<dbReference type="PANTHER" id="PTHR33077">
    <property type="entry name" value="PROTEIN TIFY 4A-RELATED-RELATED"/>
    <property type="match status" value="1"/>
</dbReference>
<dbReference type="Pfam" id="PF09425">
    <property type="entry name" value="Jas_motif"/>
    <property type="match status" value="1"/>
</dbReference>
<dbReference type="Pfam" id="PF06200">
    <property type="entry name" value="tify"/>
    <property type="match status" value="1"/>
</dbReference>
<dbReference type="SMART" id="SM00979">
    <property type="entry name" value="TIFY"/>
    <property type="match status" value="1"/>
</dbReference>
<dbReference type="PROSITE" id="PS51320">
    <property type="entry name" value="TIFY"/>
    <property type="match status" value="1"/>
</dbReference>
<gene>
    <name evidence="7" type="primary">TIFY10C</name>
    <name evidence="7" type="synonym">JAZ8</name>
    <name evidence="8" type="ORF">OsI_31517</name>
</gene>
<sequence length="232" mass="24039">MAGRATATATAAGKDRSSFAVTCSLLSQFLKEKKGGGGGLQGLGLGLRPAPAAPPAAGAGGAFRPPPTTMNLLSGLDAPAVEVEPNTADTAADELPLIKAPADQQSDESASEAAGEKAQQLTIFYGGKVVVFENFPSTKVKDLLQIVSTGDGVDKNTGTAATQSLPRPAHNSLPDLPIARRNSLHRFLEKRKGRMNANAPYQANCTAAPSKQANGDKSWLGFGQEMTIKQEI</sequence>
<evidence type="ECO:0000250" key="1">
    <source>
        <dbReference type="UniProtKB" id="Q69P94"/>
    </source>
</evidence>
<evidence type="ECO:0000250" key="2">
    <source>
        <dbReference type="UniProtKB" id="Q7XPM8"/>
    </source>
</evidence>
<evidence type="ECO:0000255" key="3"/>
<evidence type="ECO:0000255" key="4">
    <source>
        <dbReference type="PROSITE-ProRule" id="PRU00650"/>
    </source>
</evidence>
<evidence type="ECO:0000255" key="5">
    <source>
        <dbReference type="PROSITE-ProRule" id="PRU00768"/>
    </source>
</evidence>
<evidence type="ECO:0000256" key="6">
    <source>
        <dbReference type="SAM" id="MobiDB-lite"/>
    </source>
</evidence>
<evidence type="ECO:0000305" key="7"/>
<evidence type="ECO:0000312" key="8">
    <source>
        <dbReference type="EMBL" id="EAZ09244.1"/>
    </source>
</evidence>
<protein>
    <recommendedName>
        <fullName evidence="7">Protein TIFY 10c</fullName>
    </recommendedName>
</protein>
<keyword id="KW-0963">Cytoplasm</keyword>
<keyword id="KW-1184">Jasmonic acid signaling pathway</keyword>
<keyword id="KW-0539">Nucleus</keyword>
<keyword id="KW-0611">Plant defense</keyword>
<keyword id="KW-1185">Reference proteome</keyword>
<keyword id="KW-0804">Transcription</keyword>
<keyword id="KW-0805">Transcription regulation</keyword>
<keyword id="KW-0832">Ubl conjugation</keyword>
<accession>A2Z1N3</accession>
<proteinExistence type="inferred from homology"/>
<organism>
    <name type="scientific">Oryza sativa subsp. indica</name>
    <name type="common">Rice</name>
    <dbReference type="NCBI Taxonomy" id="39946"/>
    <lineage>
        <taxon>Eukaryota</taxon>
        <taxon>Viridiplantae</taxon>
        <taxon>Streptophyta</taxon>
        <taxon>Embryophyta</taxon>
        <taxon>Tracheophyta</taxon>
        <taxon>Spermatophyta</taxon>
        <taxon>Magnoliopsida</taxon>
        <taxon>Liliopsida</taxon>
        <taxon>Poales</taxon>
        <taxon>Poaceae</taxon>
        <taxon>BOP clade</taxon>
        <taxon>Oryzoideae</taxon>
        <taxon>Oryzeae</taxon>
        <taxon>Oryzinae</taxon>
        <taxon>Oryza</taxon>
        <taxon>Oryza sativa</taxon>
    </lineage>
</organism>
<name>TI10C_ORYSI</name>